<organism>
    <name type="scientific">Arabidopsis thaliana</name>
    <name type="common">Mouse-ear cress</name>
    <dbReference type="NCBI Taxonomy" id="3702"/>
    <lineage>
        <taxon>Eukaryota</taxon>
        <taxon>Viridiplantae</taxon>
        <taxon>Streptophyta</taxon>
        <taxon>Embryophyta</taxon>
        <taxon>Tracheophyta</taxon>
        <taxon>Spermatophyta</taxon>
        <taxon>Magnoliopsida</taxon>
        <taxon>eudicotyledons</taxon>
        <taxon>Gunneridae</taxon>
        <taxon>Pentapetalae</taxon>
        <taxon>rosids</taxon>
        <taxon>malvids</taxon>
        <taxon>Brassicales</taxon>
        <taxon>Brassicaceae</taxon>
        <taxon>Camelineae</taxon>
        <taxon>Arabidopsis</taxon>
    </lineage>
</organism>
<feature type="chain" id="PRO_0000125095" description="Large ribosomal subunit protein uL5z">
    <location>
        <begin position="1"/>
        <end position="182"/>
    </location>
</feature>
<feature type="sequence conflict" description="In Ref. 1; CAA57395." evidence="6" ref="1">
    <original>K</original>
    <variation>R</variation>
    <location>
        <position position="117"/>
    </location>
</feature>
<sequence>MASEKKLSNPMRDIKVQKLVLNISVGESGDRLTRASKVLEQLSGQTPVFSKARYTVRSFGIRRNEKIACYVTVRGEKAMQLLESGLKVKEYELLRRNFSDTGCFGFGIQEHIDLGIKYDPSTGIYGMDFYVVLERPGYRVARRRRCKARVGIQHRVTKDDAMKWFQVKYEGVILNKSQNITG</sequence>
<gene>
    <name evidence="3" type="primary">RPL11A</name>
    <name evidence="5" type="synonym">RPL16A</name>
    <name evidence="7" type="ordered locus">At2g42740</name>
    <name evidence="8" type="ORF">F7D19.26</name>
</gene>
<evidence type="ECO:0000250" key="1">
    <source>
        <dbReference type="UniProtKB" id="P0C0W9"/>
    </source>
</evidence>
<evidence type="ECO:0000269" key="2">
    <source>
    </source>
</evidence>
<evidence type="ECO:0000303" key="3">
    <source>
    </source>
</evidence>
<evidence type="ECO:0000303" key="4">
    <source>
    </source>
</evidence>
<evidence type="ECO:0000303" key="5">
    <source>
    </source>
</evidence>
<evidence type="ECO:0000305" key="6"/>
<evidence type="ECO:0000312" key="7">
    <source>
        <dbReference type="Araport" id="AT2G42740"/>
    </source>
</evidence>
<evidence type="ECO:0000312" key="8">
    <source>
        <dbReference type="EMBL" id="AAD21733.1"/>
    </source>
</evidence>
<dbReference type="EMBL" id="X81799">
    <property type="protein sequence ID" value="CAA57395.1"/>
    <property type="molecule type" value="Genomic_DNA"/>
</dbReference>
<dbReference type="EMBL" id="AC006931">
    <property type="protein sequence ID" value="AAD21733.1"/>
    <property type="status" value="ALT_SEQ"/>
    <property type="molecule type" value="Genomic_DNA"/>
</dbReference>
<dbReference type="EMBL" id="CP002685">
    <property type="protein sequence ID" value="AEC10163.1"/>
    <property type="molecule type" value="Genomic_DNA"/>
</dbReference>
<dbReference type="EMBL" id="AY074636">
    <property type="protein sequence ID" value="AAL69452.1"/>
    <property type="molecule type" value="mRNA"/>
</dbReference>
<dbReference type="PIR" id="F84857">
    <property type="entry name" value="F84857"/>
</dbReference>
<dbReference type="RefSeq" id="NP_850376.2">
    <property type="nucleotide sequence ID" value="NM_180045.4"/>
</dbReference>
<dbReference type="SMR" id="P42795"/>
<dbReference type="BioGRID" id="4211">
    <property type="interactions" value="119"/>
</dbReference>
<dbReference type="FunCoup" id="P42795">
    <property type="interactions" value="3239"/>
</dbReference>
<dbReference type="IntAct" id="P42795">
    <property type="interactions" value="5"/>
</dbReference>
<dbReference type="STRING" id="3702.P42795"/>
<dbReference type="GlyGen" id="P42795">
    <property type="glycosylation" value="1 site"/>
</dbReference>
<dbReference type="PaxDb" id="3702-AT2G42740.1"/>
<dbReference type="ProteomicsDB" id="226381"/>
<dbReference type="EnsemblPlants" id="AT2G42740.1">
    <property type="protein sequence ID" value="AT2G42740.1"/>
    <property type="gene ID" value="AT2G42740"/>
</dbReference>
<dbReference type="GeneID" id="818874"/>
<dbReference type="Gramene" id="AT2G42740.1">
    <property type="protein sequence ID" value="AT2G42740.1"/>
    <property type="gene ID" value="AT2G42740"/>
</dbReference>
<dbReference type="KEGG" id="ath:AT2G42740"/>
<dbReference type="Araport" id="AT2G42740"/>
<dbReference type="TAIR" id="AT2G42740">
    <property type="gene designation" value="RPL16A"/>
</dbReference>
<dbReference type="eggNOG" id="KOG0397">
    <property type="taxonomic scope" value="Eukaryota"/>
</dbReference>
<dbReference type="HOGENOM" id="CLU_061015_3_0_1"/>
<dbReference type="InParanoid" id="P42795"/>
<dbReference type="OMA" id="MDFYCIM"/>
<dbReference type="OrthoDB" id="1734943at2759"/>
<dbReference type="PhylomeDB" id="P42795"/>
<dbReference type="CD-CODE" id="4299E36E">
    <property type="entry name" value="Nucleolus"/>
</dbReference>
<dbReference type="PRO" id="PR:P42795"/>
<dbReference type="Proteomes" id="UP000006548">
    <property type="component" value="Chromosome 2"/>
</dbReference>
<dbReference type="ExpressionAtlas" id="P42795">
    <property type="expression patterns" value="baseline and differential"/>
</dbReference>
<dbReference type="GO" id="GO:0005829">
    <property type="term" value="C:cytosol"/>
    <property type="evidence" value="ECO:0007005"/>
    <property type="project" value="TAIR"/>
</dbReference>
<dbReference type="GO" id="GO:0022625">
    <property type="term" value="C:cytosolic large ribosomal subunit"/>
    <property type="evidence" value="ECO:0007005"/>
    <property type="project" value="TAIR"/>
</dbReference>
<dbReference type="GO" id="GO:0005730">
    <property type="term" value="C:nucleolus"/>
    <property type="evidence" value="ECO:0007005"/>
    <property type="project" value="TAIR"/>
</dbReference>
<dbReference type="GO" id="GO:0009506">
    <property type="term" value="C:plasmodesma"/>
    <property type="evidence" value="ECO:0007005"/>
    <property type="project" value="TAIR"/>
</dbReference>
<dbReference type="GO" id="GO:0005773">
    <property type="term" value="C:vacuole"/>
    <property type="evidence" value="ECO:0007005"/>
    <property type="project" value="TAIR"/>
</dbReference>
<dbReference type="GO" id="GO:0003729">
    <property type="term" value="F:mRNA binding"/>
    <property type="evidence" value="ECO:0000314"/>
    <property type="project" value="TAIR"/>
</dbReference>
<dbReference type="GO" id="GO:0019843">
    <property type="term" value="F:rRNA binding"/>
    <property type="evidence" value="ECO:0007669"/>
    <property type="project" value="UniProtKB-KW"/>
</dbReference>
<dbReference type="GO" id="GO:0003735">
    <property type="term" value="F:structural constituent of ribosome"/>
    <property type="evidence" value="ECO:0000314"/>
    <property type="project" value="CAFA"/>
</dbReference>
<dbReference type="GO" id="GO:0006412">
    <property type="term" value="P:translation"/>
    <property type="evidence" value="ECO:0000304"/>
    <property type="project" value="TAIR"/>
</dbReference>
<dbReference type="FunFam" id="3.30.1440.10:FF:000002">
    <property type="entry name" value="60S ribosomal protein L11"/>
    <property type="match status" value="1"/>
</dbReference>
<dbReference type="Gene3D" id="3.30.1440.10">
    <property type="match status" value="1"/>
</dbReference>
<dbReference type="InterPro" id="IPR002132">
    <property type="entry name" value="Ribosomal_uL5"/>
</dbReference>
<dbReference type="InterPro" id="IPR031309">
    <property type="entry name" value="Ribosomal_uL5_C"/>
</dbReference>
<dbReference type="InterPro" id="IPR020929">
    <property type="entry name" value="Ribosomal_uL5_CS"/>
</dbReference>
<dbReference type="InterPro" id="IPR022803">
    <property type="entry name" value="Ribosomal_uL5_dom_sf"/>
</dbReference>
<dbReference type="InterPro" id="IPR031310">
    <property type="entry name" value="Ribosomal_uL5_N"/>
</dbReference>
<dbReference type="NCBIfam" id="NF003258">
    <property type="entry name" value="PRK04219.1"/>
    <property type="match status" value="1"/>
</dbReference>
<dbReference type="PANTHER" id="PTHR11994">
    <property type="entry name" value="60S RIBOSOMAL PROTEIN L11-RELATED"/>
    <property type="match status" value="1"/>
</dbReference>
<dbReference type="Pfam" id="PF00281">
    <property type="entry name" value="Ribosomal_L5"/>
    <property type="match status" value="1"/>
</dbReference>
<dbReference type="Pfam" id="PF00673">
    <property type="entry name" value="Ribosomal_L5_C"/>
    <property type="match status" value="1"/>
</dbReference>
<dbReference type="PIRSF" id="PIRSF002161">
    <property type="entry name" value="Ribosomal_L5"/>
    <property type="match status" value="1"/>
</dbReference>
<dbReference type="SUPFAM" id="SSF55282">
    <property type="entry name" value="RL5-like"/>
    <property type="match status" value="1"/>
</dbReference>
<dbReference type="PROSITE" id="PS00358">
    <property type="entry name" value="RIBOSOMAL_L5"/>
    <property type="match status" value="1"/>
</dbReference>
<proteinExistence type="evidence at protein level"/>
<protein>
    <recommendedName>
        <fullName evidence="4">Large ribosomal subunit protein uL5z</fullName>
    </recommendedName>
    <alternativeName>
        <fullName evidence="3">60S ribosomal protein L11-1</fullName>
    </alternativeName>
    <alternativeName>
        <fullName evidence="5">L16A</fullName>
    </alternativeName>
</protein>
<keyword id="KW-0963">Cytoplasm</keyword>
<keyword id="KW-0539">Nucleus</keyword>
<keyword id="KW-1185">Reference proteome</keyword>
<keyword id="KW-0687">Ribonucleoprotein</keyword>
<keyword id="KW-0689">Ribosomal protein</keyword>
<keyword id="KW-0694">RNA-binding</keyword>
<keyword id="KW-0699">rRNA-binding</keyword>
<accession>P42795</accession>
<accession>Q9SJI2</accession>
<name>RL111_ARATH</name>
<comment type="function">
    <text evidence="1">Component of the ribosome, a large ribonucleoprotein complex responsible for the synthesis of proteins in the cell. The small ribosomal subunit (SSU) binds messenger RNAs (mRNAs) and translates the encoded message by selecting cognate aminoacyl-transfer RNA (tRNA) molecules. The large subunit (LSU) contains the ribosomal catalytic site termed the peptidyl transferase center (PTC), which catalyzes the formation of peptide bonds, thereby polymerizing the amino acids delivered by tRNAs into a polypeptide chain. The nascent polypeptides leave the ribosome through a tunnel in the LSU and interact with protein factors that function in enzymatic processing, targeting, and the membrane insertion of nascent chains at the exit of the ribosomal tunnel.</text>
</comment>
<comment type="subunit">
    <text evidence="1 2">Component of the large ribosomal subunit (By similarity). Interacts with DEK3 (PubMed:25387881).</text>
</comment>
<comment type="subcellular location">
    <subcellularLocation>
        <location evidence="1">Nucleus</location>
    </subcellularLocation>
    <subcellularLocation>
        <location evidence="1">Cytoplasm</location>
    </subcellularLocation>
</comment>
<comment type="miscellaneous">
    <text>There are four genes for RPL11 in A.thaliana.</text>
</comment>
<comment type="similarity">
    <text evidence="6">Belongs to the universal ribosomal protein uL5 family.</text>
</comment>
<comment type="sequence caution" evidence="6">
    <conflict type="erroneous gene model prediction">
        <sequence resource="EMBL-CDS" id="AAD21733"/>
    </conflict>
</comment>
<reference key="1">
    <citation type="journal article" date="1995" name="Plant J.">
        <title>Developmental regulation of ribosomal protein L16 genes in Arabidopsis thaliana.</title>
        <authorList>
            <person name="Williams M.E."/>
            <person name="Sussex I.M."/>
        </authorList>
    </citation>
    <scope>NUCLEOTIDE SEQUENCE [GENOMIC DNA]</scope>
    <source>
        <strain>cv. Landsberg erecta</strain>
    </source>
</reference>
<reference key="2">
    <citation type="journal article" date="1999" name="Nature">
        <title>Sequence and analysis of chromosome 2 of the plant Arabidopsis thaliana.</title>
        <authorList>
            <person name="Lin X."/>
            <person name="Kaul S."/>
            <person name="Rounsley S.D."/>
            <person name="Shea T.P."/>
            <person name="Benito M.-I."/>
            <person name="Town C.D."/>
            <person name="Fujii C.Y."/>
            <person name="Mason T.M."/>
            <person name="Bowman C.L."/>
            <person name="Barnstead M.E."/>
            <person name="Feldblyum T.V."/>
            <person name="Buell C.R."/>
            <person name="Ketchum K.A."/>
            <person name="Lee J.J."/>
            <person name="Ronning C.M."/>
            <person name="Koo H.L."/>
            <person name="Moffat K.S."/>
            <person name="Cronin L.A."/>
            <person name="Shen M."/>
            <person name="Pai G."/>
            <person name="Van Aken S."/>
            <person name="Umayam L."/>
            <person name="Tallon L.J."/>
            <person name="Gill J.E."/>
            <person name="Adams M.D."/>
            <person name="Carrera A.J."/>
            <person name="Creasy T.H."/>
            <person name="Goodman H.M."/>
            <person name="Somerville C.R."/>
            <person name="Copenhaver G.P."/>
            <person name="Preuss D."/>
            <person name="Nierman W.C."/>
            <person name="White O."/>
            <person name="Eisen J.A."/>
            <person name="Salzberg S.L."/>
            <person name="Fraser C.M."/>
            <person name="Venter J.C."/>
        </authorList>
    </citation>
    <scope>NUCLEOTIDE SEQUENCE [LARGE SCALE GENOMIC DNA]</scope>
    <source>
        <strain>cv. Columbia</strain>
    </source>
</reference>
<reference key="3">
    <citation type="journal article" date="2017" name="Plant J.">
        <title>Araport11: a complete reannotation of the Arabidopsis thaliana reference genome.</title>
        <authorList>
            <person name="Cheng C.Y."/>
            <person name="Krishnakumar V."/>
            <person name="Chan A.P."/>
            <person name="Thibaud-Nissen F."/>
            <person name="Schobel S."/>
            <person name="Town C.D."/>
        </authorList>
    </citation>
    <scope>GENOME REANNOTATION</scope>
    <source>
        <strain>cv. Columbia</strain>
    </source>
</reference>
<reference key="4">
    <citation type="journal article" date="2003" name="Science">
        <title>Empirical analysis of transcriptional activity in the Arabidopsis genome.</title>
        <authorList>
            <person name="Yamada K."/>
            <person name="Lim J."/>
            <person name="Dale J.M."/>
            <person name="Chen H."/>
            <person name="Shinn P."/>
            <person name="Palm C.J."/>
            <person name="Southwick A.M."/>
            <person name="Wu H.C."/>
            <person name="Kim C.J."/>
            <person name="Nguyen M."/>
            <person name="Pham P.K."/>
            <person name="Cheuk R.F."/>
            <person name="Karlin-Newmann G."/>
            <person name="Liu S.X."/>
            <person name="Lam B."/>
            <person name="Sakano H."/>
            <person name="Wu T."/>
            <person name="Yu G."/>
            <person name="Miranda M."/>
            <person name="Quach H.L."/>
            <person name="Tripp M."/>
            <person name="Chang C.H."/>
            <person name="Lee J.M."/>
            <person name="Toriumi M.J."/>
            <person name="Chan M.M."/>
            <person name="Tang C.C."/>
            <person name="Onodera C.S."/>
            <person name="Deng J.M."/>
            <person name="Akiyama K."/>
            <person name="Ansari Y."/>
            <person name="Arakawa T."/>
            <person name="Banh J."/>
            <person name="Banno F."/>
            <person name="Bowser L."/>
            <person name="Brooks S.Y."/>
            <person name="Carninci P."/>
            <person name="Chao Q."/>
            <person name="Choy N."/>
            <person name="Enju A."/>
            <person name="Goldsmith A.D."/>
            <person name="Gurjal M."/>
            <person name="Hansen N.F."/>
            <person name="Hayashizaki Y."/>
            <person name="Johnson-Hopson C."/>
            <person name="Hsuan V.W."/>
            <person name="Iida K."/>
            <person name="Karnes M."/>
            <person name="Khan S."/>
            <person name="Koesema E."/>
            <person name="Ishida J."/>
            <person name="Jiang P.X."/>
            <person name="Jones T."/>
            <person name="Kawai J."/>
            <person name="Kamiya A."/>
            <person name="Meyers C."/>
            <person name="Nakajima M."/>
            <person name="Narusaka M."/>
            <person name="Seki M."/>
            <person name="Sakurai T."/>
            <person name="Satou M."/>
            <person name="Tamse R."/>
            <person name="Vaysberg M."/>
            <person name="Wallender E.K."/>
            <person name="Wong C."/>
            <person name="Yamamura Y."/>
            <person name="Yuan S."/>
            <person name="Shinozaki K."/>
            <person name="Davis R.W."/>
            <person name="Theologis A."/>
            <person name="Ecker J.R."/>
        </authorList>
    </citation>
    <scope>NUCLEOTIDE SEQUENCE [LARGE SCALE MRNA] OF 11-182</scope>
    <source>
        <strain>cv. Columbia</strain>
    </source>
</reference>
<reference key="5">
    <citation type="journal article" date="2001" name="Plant Physiol.">
        <title>The organization of cytoplasmic ribosomal protein genes in the Arabidopsis genome.</title>
        <authorList>
            <person name="Barakat A."/>
            <person name="Szick-Miranda K."/>
            <person name="Chang I.-F."/>
            <person name="Guyot R."/>
            <person name="Blanc G."/>
            <person name="Cooke R."/>
            <person name="Delseny M."/>
            <person name="Bailey-Serres J."/>
        </authorList>
    </citation>
    <scope>GENE FAMILY ORGANIZATION</scope>
    <scope>NOMENCLATURE</scope>
</reference>
<reference key="6">
    <citation type="journal article" date="2014" name="Plant Cell">
        <title>A DEK domain-containing protein modulates chromatin structure and function in Arabidopsis.</title>
        <authorList>
            <person name="Waidmann S."/>
            <person name="Kusenda B."/>
            <person name="Mayerhofer J."/>
            <person name="Mechtler K."/>
            <person name="Jonak C."/>
        </authorList>
    </citation>
    <scope>INTERACTION WITH DEK3</scope>
    <scope>IDENTIFICATION BY MASS SPECTROMETRY</scope>
    <source>
        <strain>cv. Columbia</strain>
    </source>
</reference>
<reference key="7">
    <citation type="journal article" date="2023" name="Plant Cell">
        <title>An updated nomenclature for plant ribosomal protein genes.</title>
        <authorList>
            <person name="Scarpin M.R."/>
            <person name="Busche M."/>
            <person name="Martinez R.E."/>
            <person name="Harper L.C."/>
            <person name="Reiser L."/>
            <person name="Szakonyi D."/>
            <person name="Merchante C."/>
            <person name="Lan T."/>
            <person name="Xiong W."/>
            <person name="Mo B."/>
            <person name="Tang G."/>
            <person name="Chen X."/>
            <person name="Bailey-Serres J."/>
            <person name="Browning K.S."/>
            <person name="Brunkard J.O."/>
        </authorList>
    </citation>
    <scope>NOMENCLATURE</scope>
</reference>